<accession>Q7MWL2</accession>
<protein>
    <recommendedName>
        <fullName evidence="1">Small ribosomal subunit protein bS18</fullName>
    </recommendedName>
    <alternativeName>
        <fullName evidence="2">30S ribosomal protein S18</fullName>
    </alternativeName>
</protein>
<organism>
    <name type="scientific">Porphyromonas gingivalis (strain ATCC BAA-308 / W83)</name>
    <dbReference type="NCBI Taxonomy" id="242619"/>
    <lineage>
        <taxon>Bacteria</taxon>
        <taxon>Pseudomonadati</taxon>
        <taxon>Bacteroidota</taxon>
        <taxon>Bacteroidia</taxon>
        <taxon>Bacteroidales</taxon>
        <taxon>Porphyromonadaceae</taxon>
        <taxon>Porphyromonas</taxon>
    </lineage>
</organism>
<evidence type="ECO:0000255" key="1">
    <source>
        <dbReference type="HAMAP-Rule" id="MF_00270"/>
    </source>
</evidence>
<evidence type="ECO:0000305" key="2"/>
<gene>
    <name evidence="1" type="primary">rpsR</name>
    <name type="ordered locus">PG_0596</name>
</gene>
<proteinExistence type="inferred from homology"/>
<reference key="1">
    <citation type="journal article" date="2003" name="J. Bacteriol.">
        <title>Complete genome sequence of the oral pathogenic bacterium Porphyromonas gingivalis strain W83.</title>
        <authorList>
            <person name="Nelson K.E."/>
            <person name="Fleischmann R.D."/>
            <person name="DeBoy R.T."/>
            <person name="Paulsen I.T."/>
            <person name="Fouts D.E."/>
            <person name="Eisen J.A."/>
            <person name="Daugherty S.C."/>
            <person name="Dodson R.J."/>
            <person name="Durkin A.S."/>
            <person name="Gwinn M.L."/>
            <person name="Haft D.H."/>
            <person name="Kolonay J.F."/>
            <person name="Nelson W.C."/>
            <person name="Mason T.M."/>
            <person name="Tallon L."/>
            <person name="Gray J."/>
            <person name="Granger D."/>
            <person name="Tettelin H."/>
            <person name="Dong H."/>
            <person name="Galvin J.L."/>
            <person name="Duncan M.J."/>
            <person name="Dewhirst F.E."/>
            <person name="Fraser C.M."/>
        </authorList>
    </citation>
    <scope>NUCLEOTIDE SEQUENCE [LARGE SCALE GENOMIC DNA]</scope>
    <source>
        <strain>ATCC BAA-308 / W83</strain>
    </source>
</reference>
<comment type="function">
    <text evidence="1">Binds as a heterodimer with protein bS6 to the central domain of the 16S rRNA, where it helps stabilize the platform of the 30S subunit.</text>
</comment>
<comment type="subunit">
    <text evidence="1">Part of the 30S ribosomal subunit. Forms a tight heterodimer with protein bS6.</text>
</comment>
<comment type="similarity">
    <text evidence="1">Belongs to the bacterial ribosomal protein bS18 family.</text>
</comment>
<keyword id="KW-1185">Reference proteome</keyword>
<keyword id="KW-0687">Ribonucleoprotein</keyword>
<keyword id="KW-0689">Ribosomal protein</keyword>
<keyword id="KW-0694">RNA-binding</keyword>
<keyword id="KW-0699">rRNA-binding</keyword>
<sequence length="90" mass="10622">MAANNQGEIRYLTPLSVDTKKKKYCRFKKSGIRYIDYKDPEFLKKFLNEQGKILPRRITGTSLKFQRRVAQAVKRARHLALLPYVTDMMK</sequence>
<dbReference type="EMBL" id="AE015924">
    <property type="protein sequence ID" value="AAQ65782.1"/>
    <property type="molecule type" value="Genomic_DNA"/>
</dbReference>
<dbReference type="RefSeq" id="WP_004585133.1">
    <property type="nucleotide sequence ID" value="NC_002950.2"/>
</dbReference>
<dbReference type="SMR" id="Q7MWL2"/>
<dbReference type="STRING" id="242619.PG_0596"/>
<dbReference type="EnsemblBacteria" id="AAQ65782">
    <property type="protein sequence ID" value="AAQ65782"/>
    <property type="gene ID" value="PG_0596"/>
</dbReference>
<dbReference type="GeneID" id="29255866"/>
<dbReference type="GeneID" id="57239194"/>
<dbReference type="KEGG" id="pgi:PG_0596"/>
<dbReference type="eggNOG" id="COG0238">
    <property type="taxonomic scope" value="Bacteria"/>
</dbReference>
<dbReference type="HOGENOM" id="CLU_148710_2_0_10"/>
<dbReference type="Proteomes" id="UP000000588">
    <property type="component" value="Chromosome"/>
</dbReference>
<dbReference type="GO" id="GO:0022627">
    <property type="term" value="C:cytosolic small ribosomal subunit"/>
    <property type="evidence" value="ECO:0007669"/>
    <property type="project" value="TreeGrafter"/>
</dbReference>
<dbReference type="GO" id="GO:0070181">
    <property type="term" value="F:small ribosomal subunit rRNA binding"/>
    <property type="evidence" value="ECO:0007669"/>
    <property type="project" value="TreeGrafter"/>
</dbReference>
<dbReference type="GO" id="GO:0003735">
    <property type="term" value="F:structural constituent of ribosome"/>
    <property type="evidence" value="ECO:0007669"/>
    <property type="project" value="InterPro"/>
</dbReference>
<dbReference type="GO" id="GO:0006412">
    <property type="term" value="P:translation"/>
    <property type="evidence" value="ECO:0007669"/>
    <property type="project" value="UniProtKB-UniRule"/>
</dbReference>
<dbReference type="FunFam" id="4.10.640.10:FF:000004">
    <property type="entry name" value="30S ribosomal protein S18"/>
    <property type="match status" value="1"/>
</dbReference>
<dbReference type="Gene3D" id="4.10.640.10">
    <property type="entry name" value="Ribosomal protein S18"/>
    <property type="match status" value="1"/>
</dbReference>
<dbReference type="HAMAP" id="MF_00270">
    <property type="entry name" value="Ribosomal_bS18"/>
    <property type="match status" value="1"/>
</dbReference>
<dbReference type="InterPro" id="IPR001648">
    <property type="entry name" value="Ribosomal_bS18"/>
</dbReference>
<dbReference type="InterPro" id="IPR018275">
    <property type="entry name" value="Ribosomal_bS18_CS"/>
</dbReference>
<dbReference type="InterPro" id="IPR036870">
    <property type="entry name" value="Ribosomal_bS18_sf"/>
</dbReference>
<dbReference type="NCBIfam" id="TIGR00165">
    <property type="entry name" value="S18"/>
    <property type="match status" value="1"/>
</dbReference>
<dbReference type="PANTHER" id="PTHR13479">
    <property type="entry name" value="30S RIBOSOMAL PROTEIN S18"/>
    <property type="match status" value="1"/>
</dbReference>
<dbReference type="PANTHER" id="PTHR13479:SF40">
    <property type="entry name" value="SMALL RIBOSOMAL SUBUNIT PROTEIN BS18M"/>
    <property type="match status" value="1"/>
</dbReference>
<dbReference type="Pfam" id="PF01084">
    <property type="entry name" value="Ribosomal_S18"/>
    <property type="match status" value="1"/>
</dbReference>
<dbReference type="PRINTS" id="PR00974">
    <property type="entry name" value="RIBOSOMALS18"/>
</dbReference>
<dbReference type="SUPFAM" id="SSF46911">
    <property type="entry name" value="Ribosomal protein S18"/>
    <property type="match status" value="1"/>
</dbReference>
<dbReference type="PROSITE" id="PS00057">
    <property type="entry name" value="RIBOSOMAL_S18"/>
    <property type="match status" value="1"/>
</dbReference>
<name>RS18_PORGI</name>
<feature type="chain" id="PRO_0000111204" description="Small ribosomal subunit protein bS18">
    <location>
        <begin position="1"/>
        <end position="90"/>
    </location>
</feature>